<sequence length="113" mass="12164">MGGRGMNPAKMKQMMKQMGIDVKELKDVKEVIIKTADSNIVIENANVTIMTVQGSETYQIVGDAKEVPKSLEIPADDIKLVMEQTGVSEEEARNALKNSNGDLAEAIVALSSA</sequence>
<dbReference type="EMBL" id="AE010299">
    <property type="protein sequence ID" value="AAM04336.1"/>
    <property type="molecule type" value="Genomic_DNA"/>
</dbReference>
<dbReference type="SMR" id="Q8TSA1"/>
<dbReference type="FunCoup" id="Q8TSA1">
    <property type="interactions" value="76"/>
</dbReference>
<dbReference type="STRING" id="188937.MA_0902"/>
<dbReference type="EnsemblBacteria" id="AAM04336">
    <property type="protein sequence ID" value="AAM04336"/>
    <property type="gene ID" value="MA_0902"/>
</dbReference>
<dbReference type="KEGG" id="mac:MA_0902"/>
<dbReference type="HOGENOM" id="CLU_146475_0_0_2"/>
<dbReference type="InParanoid" id="Q8TSA1"/>
<dbReference type="PhylomeDB" id="Q8TSA1"/>
<dbReference type="Proteomes" id="UP000002487">
    <property type="component" value="Chromosome"/>
</dbReference>
<dbReference type="GO" id="GO:0003723">
    <property type="term" value="F:RNA binding"/>
    <property type="evidence" value="ECO:0007669"/>
    <property type="project" value="UniProtKB-UniRule"/>
</dbReference>
<dbReference type="GO" id="GO:0015031">
    <property type="term" value="P:protein transport"/>
    <property type="evidence" value="ECO:0007669"/>
    <property type="project" value="UniProtKB-UniRule"/>
</dbReference>
<dbReference type="CDD" id="cd22054">
    <property type="entry name" value="NAC_NACA"/>
    <property type="match status" value="1"/>
</dbReference>
<dbReference type="CDD" id="cd14359">
    <property type="entry name" value="UBA_AeNAC"/>
    <property type="match status" value="1"/>
</dbReference>
<dbReference type="Gene3D" id="1.10.8.10">
    <property type="entry name" value="DNA helicase RuvA subunit, C-terminal domain"/>
    <property type="match status" value="1"/>
</dbReference>
<dbReference type="Gene3D" id="2.20.70.30">
    <property type="entry name" value="Nascent polypeptide-associated complex domain"/>
    <property type="match status" value="1"/>
</dbReference>
<dbReference type="HAMAP" id="MF_00814">
    <property type="entry name" value="NAC_arch"/>
    <property type="match status" value="1"/>
</dbReference>
<dbReference type="InterPro" id="IPR044034">
    <property type="entry name" value="NAC-like_UBA"/>
</dbReference>
<dbReference type="InterPro" id="IPR038187">
    <property type="entry name" value="NAC_A/B_dom_sf"/>
</dbReference>
<dbReference type="InterPro" id="IPR005231">
    <property type="entry name" value="NAC_arc"/>
</dbReference>
<dbReference type="InterPro" id="IPR002715">
    <property type="entry name" value="Nas_poly-pep-assoc_cplx_dom"/>
</dbReference>
<dbReference type="InterPro" id="IPR009060">
    <property type="entry name" value="UBA-like_sf"/>
</dbReference>
<dbReference type="NCBIfam" id="TIGR00264">
    <property type="entry name" value="archaeal-type nascent polypeptide-associated complex protein"/>
    <property type="match status" value="1"/>
</dbReference>
<dbReference type="Pfam" id="PF01849">
    <property type="entry name" value="NAC"/>
    <property type="match status" value="1"/>
</dbReference>
<dbReference type="Pfam" id="PF19026">
    <property type="entry name" value="UBA_HYPK"/>
    <property type="match status" value="1"/>
</dbReference>
<dbReference type="SMART" id="SM01407">
    <property type="entry name" value="NAC"/>
    <property type="match status" value="1"/>
</dbReference>
<dbReference type="SUPFAM" id="SSF46934">
    <property type="entry name" value="UBA-like"/>
    <property type="match status" value="1"/>
</dbReference>
<dbReference type="PROSITE" id="PS51151">
    <property type="entry name" value="NAC_AB"/>
    <property type="match status" value="1"/>
</dbReference>
<protein>
    <recommendedName>
        <fullName evidence="1">Nascent polypeptide-associated complex protein</fullName>
    </recommendedName>
</protein>
<organism>
    <name type="scientific">Methanosarcina acetivorans (strain ATCC 35395 / DSM 2834 / JCM 12185 / C2A)</name>
    <dbReference type="NCBI Taxonomy" id="188937"/>
    <lineage>
        <taxon>Archaea</taxon>
        <taxon>Methanobacteriati</taxon>
        <taxon>Methanobacteriota</taxon>
        <taxon>Stenosarchaea group</taxon>
        <taxon>Methanomicrobia</taxon>
        <taxon>Methanosarcinales</taxon>
        <taxon>Methanosarcinaceae</taxon>
        <taxon>Methanosarcina</taxon>
    </lineage>
</organism>
<comment type="function">
    <text evidence="1">Contacts the emerging nascent chain on the ribosome.</text>
</comment>
<comment type="subunit">
    <text evidence="1">Homodimer. Interacts with the ribosome. Binds ribosomal RNA.</text>
</comment>
<comment type="similarity">
    <text evidence="1">Belongs to the NAC-alpha family.</text>
</comment>
<keyword id="KW-0653">Protein transport</keyword>
<keyword id="KW-1185">Reference proteome</keyword>
<keyword id="KW-0694">RNA-binding</keyword>
<keyword id="KW-0813">Transport</keyword>
<accession>Q8TSA1</accession>
<name>NAC_METAC</name>
<evidence type="ECO:0000255" key="1">
    <source>
        <dbReference type="HAMAP-Rule" id="MF_00814"/>
    </source>
</evidence>
<gene>
    <name evidence="1" type="primary">nac</name>
    <name type="ordered locus">MA_0902</name>
</gene>
<proteinExistence type="inferred from homology"/>
<feature type="chain" id="PRO_0000135604" description="Nascent polypeptide-associated complex protein">
    <location>
        <begin position="1"/>
        <end position="113"/>
    </location>
</feature>
<feature type="domain" description="NAC-A/B" evidence="1">
    <location>
        <begin position="5"/>
        <end position="73"/>
    </location>
</feature>
<reference key="1">
    <citation type="journal article" date="2002" name="Genome Res.">
        <title>The genome of Methanosarcina acetivorans reveals extensive metabolic and physiological diversity.</title>
        <authorList>
            <person name="Galagan J.E."/>
            <person name="Nusbaum C."/>
            <person name="Roy A."/>
            <person name="Endrizzi M.G."/>
            <person name="Macdonald P."/>
            <person name="FitzHugh W."/>
            <person name="Calvo S."/>
            <person name="Engels R."/>
            <person name="Smirnov S."/>
            <person name="Atnoor D."/>
            <person name="Brown A."/>
            <person name="Allen N."/>
            <person name="Naylor J."/>
            <person name="Stange-Thomann N."/>
            <person name="DeArellano K."/>
            <person name="Johnson R."/>
            <person name="Linton L."/>
            <person name="McEwan P."/>
            <person name="McKernan K."/>
            <person name="Talamas J."/>
            <person name="Tirrell A."/>
            <person name="Ye W."/>
            <person name="Zimmer A."/>
            <person name="Barber R.D."/>
            <person name="Cann I."/>
            <person name="Graham D.E."/>
            <person name="Grahame D.A."/>
            <person name="Guss A.M."/>
            <person name="Hedderich R."/>
            <person name="Ingram-Smith C."/>
            <person name="Kuettner H.C."/>
            <person name="Krzycki J.A."/>
            <person name="Leigh J.A."/>
            <person name="Li W."/>
            <person name="Liu J."/>
            <person name="Mukhopadhyay B."/>
            <person name="Reeve J.N."/>
            <person name="Smith K."/>
            <person name="Springer T.A."/>
            <person name="Umayam L.A."/>
            <person name="White O."/>
            <person name="White R.H."/>
            <person name="de Macario E.C."/>
            <person name="Ferry J.G."/>
            <person name="Jarrell K.F."/>
            <person name="Jing H."/>
            <person name="Macario A.J.L."/>
            <person name="Paulsen I.T."/>
            <person name="Pritchett M."/>
            <person name="Sowers K.R."/>
            <person name="Swanson R.V."/>
            <person name="Zinder S.H."/>
            <person name="Lander E."/>
            <person name="Metcalf W.W."/>
            <person name="Birren B."/>
        </authorList>
    </citation>
    <scope>NUCLEOTIDE SEQUENCE [LARGE SCALE GENOMIC DNA]</scope>
    <source>
        <strain>ATCC 35395 / DSM 2834 / JCM 12185 / C2A</strain>
    </source>
</reference>